<evidence type="ECO:0000255" key="1">
    <source>
        <dbReference type="HAMAP-Rule" id="MF_04129"/>
    </source>
</evidence>
<organismHost>
    <name type="scientific">Equus caballus</name>
    <name type="common">Horse</name>
    <dbReference type="NCBI Taxonomy" id="9796"/>
</organismHost>
<reference key="1">
    <citation type="submission" date="1996-01" db="EMBL/GenBank/DDBJ databases">
        <title>Comparative sequence analysis of the VP6 gene of equine rotaviruses.</title>
        <authorList>
            <person name="Minamoto N."/>
        </authorList>
    </citation>
    <scope>NUCLEOTIDE SEQUENCE [GENOMIC RNA]</scope>
    <source>
        <strain>HO-5</strain>
        <strain>R-13</strain>
    </source>
</reference>
<comment type="function">
    <text evidence="1">Intermediate capsid protein that self assembles to form an icosahedral capsid with a T=13 symmetry, which consists of 230 trimers of VP6, with channels at each of its five-fold vertices. This capsid constitutes the middle concentric layer of the viral mature particle. The innermost VP2 capsid and the intermediate VP6 capsid remain intact following cell entry to protect the dsRNA from degradation and to prevent unfavorable antiviral responses in the host cell during all the replication cycle of the virus. Nascent transcripts are transcribed within the structural confines of this double-layered particle (DLP) and are extruded through the channels at the five-fold axes. VP6 is required for the transcription activity of the DLP.</text>
</comment>
<comment type="subunit">
    <text evidence="1">Homotrimer. Interacts with the inner capsid protein VP2. Interacts with the outer capsid glycoprotein VP7. Interacts with the outer capsid protein VP5*.</text>
</comment>
<comment type="subcellular location">
    <subcellularLocation>
        <location evidence="1">Virion</location>
    </subcellularLocation>
    <text evidence="1">Component of the intermediate capsid. Also found in spherical cytoplasmic structures, called virus factories, that appear early after infection and are the site of viral replication and packaging.</text>
</comment>
<comment type="PTM">
    <text evidence="1">The N-terminus is blocked.</text>
</comment>
<comment type="PTM">
    <text evidence="1">Sumoylated with SUMO1 and SUMO2. Sumoylation of viral proteins seems to have a positive role on viral replication.</text>
</comment>
<comment type="miscellaneous">
    <text evidence="1">The VP6 trimer contains a zinc ion located at the center of the molecule. The zinc ion is not essential for either trimerization or transcription activity of the DLP. Zinc-depleted VP6 has an increased sensitivity to proteases.</text>
</comment>
<comment type="similarity">
    <text evidence="1">Belongs to the rotavirus VP6 family.</text>
</comment>
<feature type="chain" id="PRO_0000368161" description="Intermediate capsid protein VP6">
    <location>
        <begin position="1"/>
        <end position="397"/>
    </location>
</feature>
<feature type="region of interest" description="Interaction with the inner capsid protein VP2" evidence="1">
    <location>
        <begin position="62"/>
        <end position="73"/>
    </location>
</feature>
<feature type="binding site" evidence="1">
    <location>
        <position position="153"/>
    </location>
    <ligand>
        <name>Zn(2+)</name>
        <dbReference type="ChEBI" id="CHEBI:29105"/>
        <note>ligand shared between all trimeric partners</note>
    </ligand>
</feature>
<feature type="binding site" evidence="1">
    <location>
        <position position="266"/>
    </location>
    <ligand>
        <name>Ca(2+)</name>
        <dbReference type="ChEBI" id="CHEBI:29108"/>
    </ligand>
</feature>
<feature type="binding site" evidence="1">
    <location>
        <position position="286"/>
    </location>
    <ligand>
        <name>Ca(2+)</name>
        <dbReference type="ChEBI" id="CHEBI:29108"/>
    </ligand>
</feature>
<name>VP6_ROTEO</name>
<accession>Q89601</accession>
<keyword id="KW-0106">Calcium</keyword>
<keyword id="KW-0167">Capsid protein</keyword>
<keyword id="KW-1154">Intermediate capsid protein</keyword>
<keyword id="KW-0479">Metal-binding</keyword>
<keyword id="KW-0832">Ubl conjugation</keyword>
<keyword id="KW-0946">Virion</keyword>
<keyword id="KW-0862">Zinc</keyword>
<dbReference type="EMBL" id="D82973">
    <property type="protein sequence ID" value="BAA11661.1"/>
    <property type="molecule type" value="Genomic_RNA"/>
</dbReference>
<dbReference type="EMBL" id="D82976">
    <property type="protein sequence ID" value="BAA11664.1"/>
    <property type="molecule type" value="Genomic_RNA"/>
</dbReference>
<dbReference type="SMR" id="Q89601"/>
<dbReference type="GO" id="GO:0019031">
    <property type="term" value="C:viral envelope"/>
    <property type="evidence" value="ECO:0007669"/>
    <property type="project" value="UniProtKB-UniRule"/>
</dbReference>
<dbReference type="GO" id="GO:0039626">
    <property type="term" value="C:viral intermediate capsid"/>
    <property type="evidence" value="ECO:0007669"/>
    <property type="project" value="UniProtKB-UniRule"/>
</dbReference>
<dbReference type="GO" id="GO:0046789">
    <property type="term" value="F:host cell surface receptor binding"/>
    <property type="evidence" value="ECO:0007669"/>
    <property type="project" value="UniProtKB-UniRule"/>
</dbReference>
<dbReference type="GO" id="GO:0046872">
    <property type="term" value="F:metal ion binding"/>
    <property type="evidence" value="ECO:0007669"/>
    <property type="project" value="UniProtKB-UniRule"/>
</dbReference>
<dbReference type="GO" id="GO:0005198">
    <property type="term" value="F:structural molecule activity"/>
    <property type="evidence" value="ECO:0007669"/>
    <property type="project" value="UniProtKB-UniRule"/>
</dbReference>
<dbReference type="GO" id="GO:0019064">
    <property type="term" value="P:fusion of virus membrane with host plasma membrane"/>
    <property type="evidence" value="ECO:0007669"/>
    <property type="project" value="UniProtKB-UniRule"/>
</dbReference>
<dbReference type="FunFam" id="2.60.120.170:FF:000001">
    <property type="entry name" value="Intermediate capsid protein VP6"/>
    <property type="match status" value="1"/>
</dbReference>
<dbReference type="Gene3D" id="2.60.120.170">
    <property type="match status" value="1"/>
</dbReference>
<dbReference type="Gene3D" id="1.10.1350.10">
    <property type="entry name" value="Viral capsid alpha domain"/>
    <property type="match status" value="1"/>
</dbReference>
<dbReference type="HAMAP" id="MF_04126">
    <property type="entry name" value="Rota_VP6"/>
    <property type="match status" value="1"/>
</dbReference>
<dbReference type="HAMAP" id="MF_04129">
    <property type="entry name" value="Rota_VP6_A"/>
    <property type="match status" value="1"/>
</dbReference>
<dbReference type="InterPro" id="IPR008980">
    <property type="entry name" value="Capsid_hemagglutn"/>
</dbReference>
<dbReference type="InterPro" id="IPR001385">
    <property type="entry name" value="Rotavirus_A/C_VP6"/>
</dbReference>
<dbReference type="InterPro" id="IPR008935">
    <property type="entry name" value="Virus_capsid_a-hlx_vir"/>
</dbReference>
<dbReference type="Pfam" id="PF00980">
    <property type="entry name" value="Rota_Capsid_VP6"/>
    <property type="match status" value="1"/>
</dbReference>
<dbReference type="SUPFAM" id="SSF48345">
    <property type="entry name" value="A virus capsid protein alpha-helical domain"/>
    <property type="match status" value="1"/>
</dbReference>
<dbReference type="SUPFAM" id="SSF49818">
    <property type="entry name" value="Viral protein domain"/>
    <property type="match status" value="1"/>
</dbReference>
<proteinExistence type="inferred from homology"/>
<organism>
    <name type="scientific">Rotavirus A (isolate RVA/Equine/Japan/HO-5/1980/G3P[X])</name>
    <name type="common">RV-A</name>
    <dbReference type="NCBI Taxonomy" id="148357"/>
    <lineage>
        <taxon>Viruses</taxon>
        <taxon>Riboviria</taxon>
        <taxon>Orthornavirae</taxon>
        <taxon>Duplornaviricota</taxon>
        <taxon>Resentoviricetes</taxon>
        <taxon>Reovirales</taxon>
        <taxon>Sedoreoviridae</taxon>
        <taxon>Rotavirus</taxon>
        <taxon>Rotavirus A</taxon>
    </lineage>
</organism>
<sequence length="397" mass="45003">MEVLYSISKTLKDARDKIVEGTLYSNVSDIIQQFNQMIVTMNGNEFQTGGIGTLPIRNWTFDFGLLGTTLLNLDANYVETARTTIEYFIDFIDNVCMDEMTRESQRNGIAPQSDALRKLSGIKFKRINFDNSSEYIENWNLQNRRQRTGFVFHKPNIFPYSASFTLNRSQPLHNDLMGTMWLNAGSEIQVAGFDYSCAFNAPANTQQFEHIVQLRRALTTATITILPDAERFSFPRVINSADGATTWYFNPVILRPNNVEVEFLLNGQIINTYQARFGTIIARNFDTIRLSFQLMRPPNMTPAVNALFPQAQPFQHHATVGLTLRIDSAVCESVLADSNETMLANVTAVRQEYAVPVGPVFPPGMNWTELITNYSPSREDNLQRVFTVASIRSMLIK</sequence>
<protein>
    <recommendedName>
        <fullName evidence="1">Intermediate capsid protein VP6</fullName>
    </recommendedName>
</protein>